<sequence>MSKLDKNEFICLKFDAWLYEKDDNLPYSLLEFIWDELEAKLNKDETITKEIKDKIKKLGKKSVNLWKNMVLGAINATNIKAGTSPITELSGIKINASFDGSKFVGYVVNASKEDENEEESYHKKVKELQNCFKELSKTLADNGKKLIIFIDELDRCEAENILNLLASIKLFFSLGGEDEDENKNDDEIKILFIL</sequence>
<reference key="1">
    <citation type="journal article" date="1996" name="Science">
        <title>Complete genome sequence of the methanogenic archaeon, Methanococcus jannaschii.</title>
        <authorList>
            <person name="Bult C.J."/>
            <person name="White O."/>
            <person name="Olsen G.J."/>
            <person name="Zhou L."/>
            <person name="Fleischmann R.D."/>
            <person name="Sutton G.G."/>
            <person name="Blake J.A."/>
            <person name="FitzGerald L.M."/>
            <person name="Clayton R.A."/>
            <person name="Gocayne J.D."/>
            <person name="Kerlavage A.R."/>
            <person name="Dougherty B.A."/>
            <person name="Tomb J.-F."/>
            <person name="Adams M.D."/>
            <person name="Reich C.I."/>
            <person name="Overbeek R."/>
            <person name="Kirkness E.F."/>
            <person name="Weinstock K.G."/>
            <person name="Merrick J.M."/>
            <person name="Glodek A."/>
            <person name="Scott J.L."/>
            <person name="Geoghagen N.S.M."/>
            <person name="Weidman J.F."/>
            <person name="Fuhrmann J.L."/>
            <person name="Nguyen D."/>
            <person name="Utterback T.R."/>
            <person name="Kelley J.M."/>
            <person name="Peterson J.D."/>
            <person name="Sadow P.W."/>
            <person name="Hanna M.C."/>
            <person name="Cotton M.D."/>
            <person name="Roberts K.M."/>
            <person name="Hurst M.A."/>
            <person name="Kaine B.P."/>
            <person name="Borodovsky M."/>
            <person name="Klenk H.-P."/>
            <person name="Fraser C.M."/>
            <person name="Smith H.O."/>
            <person name="Woese C.R."/>
            <person name="Venter J.C."/>
        </authorList>
    </citation>
    <scope>NUCLEOTIDE SEQUENCE [LARGE SCALE GENOMIC DNA]</scope>
    <source>
        <strain>ATCC 43067 / DSM 2661 / JAL-1 / JCM 10045 / NBRC 100440</strain>
    </source>
</reference>
<organism>
    <name type="scientific">Methanocaldococcus jannaschii (strain ATCC 43067 / DSM 2661 / JAL-1 / JCM 10045 / NBRC 100440)</name>
    <name type="common">Methanococcus jannaschii</name>
    <dbReference type="NCBI Taxonomy" id="243232"/>
    <lineage>
        <taxon>Archaea</taxon>
        <taxon>Methanobacteriati</taxon>
        <taxon>Methanobacteriota</taxon>
        <taxon>Methanomada group</taxon>
        <taxon>Methanococci</taxon>
        <taxon>Methanococcales</taxon>
        <taxon>Methanocaldococcaceae</taxon>
        <taxon>Methanocaldococcus</taxon>
    </lineage>
</organism>
<accession>Q57641</accession>
<feature type="chain" id="PRO_0000106731" description="Uncharacterized protein MJ0182">
    <location>
        <begin position="1"/>
        <end position="194"/>
    </location>
</feature>
<dbReference type="EMBL" id="L77117">
    <property type="protein sequence ID" value="AAB98179.1"/>
    <property type="molecule type" value="Genomic_DNA"/>
</dbReference>
<dbReference type="PIR" id="G64322">
    <property type="entry name" value="G64322"/>
</dbReference>
<dbReference type="SMR" id="Q57641"/>
<dbReference type="STRING" id="243232.MJ_0182"/>
<dbReference type="PaxDb" id="243232-MJ_0182"/>
<dbReference type="EnsemblBacteria" id="AAB98179">
    <property type="protein sequence ID" value="AAB98179"/>
    <property type="gene ID" value="MJ_0182"/>
</dbReference>
<dbReference type="KEGG" id="mja:MJ_0182"/>
<dbReference type="eggNOG" id="arCOG12715">
    <property type="taxonomic scope" value="Archaea"/>
</dbReference>
<dbReference type="HOGENOM" id="CLU_1399755_0_0_2"/>
<dbReference type="InParanoid" id="Q57641"/>
<dbReference type="Proteomes" id="UP000000805">
    <property type="component" value="Chromosome"/>
</dbReference>
<dbReference type="InterPro" id="IPR011646">
    <property type="entry name" value="KAP_P-loop"/>
</dbReference>
<dbReference type="Pfam" id="PF07693">
    <property type="entry name" value="KAP_NTPase"/>
    <property type="match status" value="1"/>
</dbReference>
<proteinExistence type="predicted"/>
<protein>
    <recommendedName>
        <fullName>Uncharacterized protein MJ0182</fullName>
    </recommendedName>
</protein>
<name>Y182_METJA</name>
<gene>
    <name type="ordered locus">MJ0182</name>
</gene>
<keyword id="KW-1185">Reference proteome</keyword>